<protein>
    <recommendedName>
        <fullName evidence="1">4-hydroxy-3-methylbut-2-enyl diphosphate reductase</fullName>
        <shortName evidence="1">HMBPP reductase</shortName>
        <ecNumber evidence="1">1.17.7.4</ecNumber>
    </recommendedName>
</protein>
<proteinExistence type="inferred from homology"/>
<keyword id="KW-0004">4Fe-4S</keyword>
<keyword id="KW-0408">Iron</keyword>
<keyword id="KW-0411">Iron-sulfur</keyword>
<keyword id="KW-0414">Isoprene biosynthesis</keyword>
<keyword id="KW-0479">Metal-binding</keyword>
<keyword id="KW-0560">Oxidoreductase</keyword>
<keyword id="KW-1185">Reference proteome</keyword>
<evidence type="ECO:0000255" key="1">
    <source>
        <dbReference type="HAMAP-Rule" id="MF_00191"/>
    </source>
</evidence>
<dbReference type="EC" id="1.17.7.4" evidence="1"/>
<dbReference type="EMBL" id="AE014295">
    <property type="protein sequence ID" value="AAN25161.1"/>
    <property type="molecule type" value="Genomic_DNA"/>
</dbReference>
<dbReference type="RefSeq" id="NP_696525.1">
    <property type="nucleotide sequence ID" value="NC_004307.2"/>
</dbReference>
<dbReference type="SMR" id="Q8G4L8"/>
<dbReference type="STRING" id="206672.BL1361"/>
<dbReference type="EnsemblBacteria" id="AAN25161">
    <property type="protein sequence ID" value="AAN25161"/>
    <property type="gene ID" value="BL1361"/>
</dbReference>
<dbReference type="KEGG" id="blo:BL1361"/>
<dbReference type="PATRIC" id="fig|206672.9.peg.218"/>
<dbReference type="HOGENOM" id="CLU_027486_1_0_11"/>
<dbReference type="OrthoDB" id="9804068at2"/>
<dbReference type="PhylomeDB" id="Q8G4L8"/>
<dbReference type="UniPathway" id="UPA00056">
    <property type="reaction ID" value="UER00097"/>
</dbReference>
<dbReference type="UniPathway" id="UPA00059">
    <property type="reaction ID" value="UER00105"/>
</dbReference>
<dbReference type="Proteomes" id="UP000000439">
    <property type="component" value="Chromosome"/>
</dbReference>
<dbReference type="GO" id="GO:0051539">
    <property type="term" value="F:4 iron, 4 sulfur cluster binding"/>
    <property type="evidence" value="ECO:0007669"/>
    <property type="project" value="UniProtKB-UniRule"/>
</dbReference>
<dbReference type="GO" id="GO:0051745">
    <property type="term" value="F:4-hydroxy-3-methylbut-2-enyl diphosphate reductase activity"/>
    <property type="evidence" value="ECO:0007669"/>
    <property type="project" value="UniProtKB-UniRule"/>
</dbReference>
<dbReference type="GO" id="GO:0046872">
    <property type="term" value="F:metal ion binding"/>
    <property type="evidence" value="ECO:0007669"/>
    <property type="project" value="UniProtKB-KW"/>
</dbReference>
<dbReference type="GO" id="GO:0050992">
    <property type="term" value="P:dimethylallyl diphosphate biosynthetic process"/>
    <property type="evidence" value="ECO:0007669"/>
    <property type="project" value="UniProtKB-UniRule"/>
</dbReference>
<dbReference type="GO" id="GO:0019288">
    <property type="term" value="P:isopentenyl diphosphate biosynthetic process, methylerythritol 4-phosphate pathway"/>
    <property type="evidence" value="ECO:0007669"/>
    <property type="project" value="UniProtKB-UniRule"/>
</dbReference>
<dbReference type="GO" id="GO:0016114">
    <property type="term" value="P:terpenoid biosynthetic process"/>
    <property type="evidence" value="ECO:0007669"/>
    <property type="project" value="UniProtKB-UniRule"/>
</dbReference>
<dbReference type="CDD" id="cd13944">
    <property type="entry name" value="lytB_ispH"/>
    <property type="match status" value="1"/>
</dbReference>
<dbReference type="Gene3D" id="3.40.50.11270">
    <property type="match status" value="1"/>
</dbReference>
<dbReference type="Gene3D" id="3.40.1010.20">
    <property type="entry name" value="4-hydroxy-3-methylbut-2-enyl diphosphate reductase, catalytic domain"/>
    <property type="match status" value="2"/>
</dbReference>
<dbReference type="HAMAP" id="MF_00191">
    <property type="entry name" value="IspH"/>
    <property type="match status" value="1"/>
</dbReference>
<dbReference type="InterPro" id="IPR003451">
    <property type="entry name" value="LytB/IspH"/>
</dbReference>
<dbReference type="NCBIfam" id="TIGR00216">
    <property type="entry name" value="ispH_lytB"/>
    <property type="match status" value="1"/>
</dbReference>
<dbReference type="NCBIfam" id="NF002189">
    <property type="entry name" value="PRK01045.1-3"/>
    <property type="match status" value="1"/>
</dbReference>
<dbReference type="PANTHER" id="PTHR30426">
    <property type="entry name" value="4-HYDROXY-3-METHYLBUT-2-ENYL DIPHOSPHATE REDUCTASE"/>
    <property type="match status" value="1"/>
</dbReference>
<dbReference type="PANTHER" id="PTHR30426:SF0">
    <property type="entry name" value="4-HYDROXY-3-METHYLBUT-2-ENYL DIPHOSPHATE REDUCTASE"/>
    <property type="match status" value="1"/>
</dbReference>
<dbReference type="Pfam" id="PF02401">
    <property type="entry name" value="LYTB"/>
    <property type="match status" value="1"/>
</dbReference>
<accession>Q8G4L8</accession>
<feature type="chain" id="PRO_0000128780" description="4-hydroxy-3-methylbut-2-enyl diphosphate reductase">
    <location>
        <begin position="1"/>
        <end position="352"/>
    </location>
</feature>
<feature type="active site" description="Proton donor" evidence="1">
    <location>
        <position position="166"/>
    </location>
</feature>
<feature type="binding site" evidence="1">
    <location>
        <position position="36"/>
    </location>
    <ligand>
        <name>[4Fe-4S] cluster</name>
        <dbReference type="ChEBI" id="CHEBI:49883"/>
    </ligand>
</feature>
<feature type="binding site" evidence="1">
    <location>
        <position position="76"/>
    </location>
    <ligand>
        <name>(2E)-4-hydroxy-3-methylbut-2-enyl diphosphate</name>
        <dbReference type="ChEBI" id="CHEBI:128753"/>
    </ligand>
</feature>
<feature type="binding site" evidence="1">
    <location>
        <position position="76"/>
    </location>
    <ligand>
        <name>dimethylallyl diphosphate</name>
        <dbReference type="ChEBI" id="CHEBI:57623"/>
    </ligand>
</feature>
<feature type="binding site" evidence="1">
    <location>
        <position position="76"/>
    </location>
    <ligand>
        <name>isopentenyl diphosphate</name>
        <dbReference type="ChEBI" id="CHEBI:128769"/>
    </ligand>
</feature>
<feature type="binding site" evidence="1">
    <location>
        <position position="114"/>
    </location>
    <ligand>
        <name>(2E)-4-hydroxy-3-methylbut-2-enyl diphosphate</name>
        <dbReference type="ChEBI" id="CHEBI:128753"/>
    </ligand>
</feature>
<feature type="binding site" evidence="1">
    <location>
        <position position="114"/>
    </location>
    <ligand>
        <name>dimethylallyl diphosphate</name>
        <dbReference type="ChEBI" id="CHEBI:57623"/>
    </ligand>
</feature>
<feature type="binding site" evidence="1">
    <location>
        <position position="114"/>
    </location>
    <ligand>
        <name>isopentenyl diphosphate</name>
        <dbReference type="ChEBI" id="CHEBI:128769"/>
    </ligand>
</feature>
<feature type="binding site" evidence="1">
    <location>
        <position position="136"/>
    </location>
    <ligand>
        <name>[4Fe-4S] cluster</name>
        <dbReference type="ChEBI" id="CHEBI:49883"/>
    </ligand>
</feature>
<feature type="binding site" evidence="1">
    <location>
        <position position="164"/>
    </location>
    <ligand>
        <name>(2E)-4-hydroxy-3-methylbut-2-enyl diphosphate</name>
        <dbReference type="ChEBI" id="CHEBI:128753"/>
    </ligand>
</feature>
<feature type="binding site" evidence="1">
    <location>
        <position position="164"/>
    </location>
    <ligand>
        <name>dimethylallyl diphosphate</name>
        <dbReference type="ChEBI" id="CHEBI:57623"/>
    </ligand>
</feature>
<feature type="binding site" evidence="1">
    <location>
        <position position="164"/>
    </location>
    <ligand>
        <name>isopentenyl diphosphate</name>
        <dbReference type="ChEBI" id="CHEBI:128769"/>
    </ligand>
</feature>
<feature type="binding site" evidence="1">
    <location>
        <position position="204"/>
    </location>
    <ligand>
        <name>(2E)-4-hydroxy-3-methylbut-2-enyl diphosphate</name>
        <dbReference type="ChEBI" id="CHEBI:128753"/>
    </ligand>
</feature>
<feature type="binding site" evidence="1">
    <location>
        <position position="234"/>
    </location>
    <ligand>
        <name>[4Fe-4S] cluster</name>
        <dbReference type="ChEBI" id="CHEBI:49883"/>
    </ligand>
</feature>
<feature type="binding site" evidence="1">
    <location>
        <position position="262"/>
    </location>
    <ligand>
        <name>(2E)-4-hydroxy-3-methylbut-2-enyl diphosphate</name>
        <dbReference type="ChEBI" id="CHEBI:128753"/>
    </ligand>
</feature>
<feature type="binding site" evidence="1">
    <location>
        <position position="262"/>
    </location>
    <ligand>
        <name>dimethylallyl diphosphate</name>
        <dbReference type="ChEBI" id="CHEBI:57623"/>
    </ligand>
</feature>
<feature type="binding site" evidence="1">
    <location>
        <position position="262"/>
    </location>
    <ligand>
        <name>isopentenyl diphosphate</name>
        <dbReference type="ChEBI" id="CHEBI:128769"/>
    </ligand>
</feature>
<feature type="binding site" evidence="1">
    <location>
        <position position="263"/>
    </location>
    <ligand>
        <name>(2E)-4-hydroxy-3-methylbut-2-enyl diphosphate</name>
        <dbReference type="ChEBI" id="CHEBI:128753"/>
    </ligand>
</feature>
<feature type="binding site" evidence="1">
    <location>
        <position position="263"/>
    </location>
    <ligand>
        <name>dimethylallyl diphosphate</name>
        <dbReference type="ChEBI" id="CHEBI:57623"/>
    </ligand>
</feature>
<feature type="binding site" evidence="1">
    <location>
        <position position="263"/>
    </location>
    <ligand>
        <name>isopentenyl diphosphate</name>
        <dbReference type="ChEBI" id="CHEBI:128769"/>
    </ligand>
</feature>
<feature type="binding site" evidence="1">
    <location>
        <position position="264"/>
    </location>
    <ligand>
        <name>(2E)-4-hydroxy-3-methylbut-2-enyl diphosphate</name>
        <dbReference type="ChEBI" id="CHEBI:128753"/>
    </ligand>
</feature>
<feature type="binding site" evidence="1">
    <location>
        <position position="264"/>
    </location>
    <ligand>
        <name>dimethylallyl diphosphate</name>
        <dbReference type="ChEBI" id="CHEBI:57623"/>
    </ligand>
</feature>
<feature type="binding site" evidence="1">
    <location>
        <position position="264"/>
    </location>
    <ligand>
        <name>isopentenyl diphosphate</name>
        <dbReference type="ChEBI" id="CHEBI:128769"/>
    </ligand>
</feature>
<feature type="binding site" evidence="1">
    <location>
        <position position="309"/>
    </location>
    <ligand>
        <name>(2E)-4-hydroxy-3-methylbut-2-enyl diphosphate</name>
        <dbReference type="ChEBI" id="CHEBI:128753"/>
    </ligand>
</feature>
<feature type="binding site" evidence="1">
    <location>
        <position position="309"/>
    </location>
    <ligand>
        <name>dimethylallyl diphosphate</name>
        <dbReference type="ChEBI" id="CHEBI:57623"/>
    </ligand>
</feature>
<feature type="binding site" evidence="1">
    <location>
        <position position="309"/>
    </location>
    <ligand>
        <name>isopentenyl diphosphate</name>
        <dbReference type="ChEBI" id="CHEBI:128769"/>
    </ligand>
</feature>
<comment type="function">
    <text evidence="1">Catalyzes the conversion of 1-hydroxy-2-methyl-2-(E)-butenyl 4-diphosphate (HMBPP) into a mixture of isopentenyl diphosphate (IPP) and dimethylallyl diphosphate (DMAPP). Acts in the terminal step of the DOXP/MEP pathway for isoprenoid precursor biosynthesis.</text>
</comment>
<comment type="catalytic activity">
    <reaction evidence="1">
        <text>isopentenyl diphosphate + 2 oxidized [2Fe-2S]-[ferredoxin] + H2O = (2E)-4-hydroxy-3-methylbut-2-enyl diphosphate + 2 reduced [2Fe-2S]-[ferredoxin] + 2 H(+)</text>
        <dbReference type="Rhea" id="RHEA:24488"/>
        <dbReference type="Rhea" id="RHEA-COMP:10000"/>
        <dbReference type="Rhea" id="RHEA-COMP:10001"/>
        <dbReference type="ChEBI" id="CHEBI:15377"/>
        <dbReference type="ChEBI" id="CHEBI:15378"/>
        <dbReference type="ChEBI" id="CHEBI:33737"/>
        <dbReference type="ChEBI" id="CHEBI:33738"/>
        <dbReference type="ChEBI" id="CHEBI:128753"/>
        <dbReference type="ChEBI" id="CHEBI:128769"/>
        <dbReference type="EC" id="1.17.7.4"/>
    </reaction>
</comment>
<comment type="catalytic activity">
    <reaction evidence="1">
        <text>dimethylallyl diphosphate + 2 oxidized [2Fe-2S]-[ferredoxin] + H2O = (2E)-4-hydroxy-3-methylbut-2-enyl diphosphate + 2 reduced [2Fe-2S]-[ferredoxin] + 2 H(+)</text>
        <dbReference type="Rhea" id="RHEA:24825"/>
        <dbReference type="Rhea" id="RHEA-COMP:10000"/>
        <dbReference type="Rhea" id="RHEA-COMP:10001"/>
        <dbReference type="ChEBI" id="CHEBI:15377"/>
        <dbReference type="ChEBI" id="CHEBI:15378"/>
        <dbReference type="ChEBI" id="CHEBI:33737"/>
        <dbReference type="ChEBI" id="CHEBI:33738"/>
        <dbReference type="ChEBI" id="CHEBI:57623"/>
        <dbReference type="ChEBI" id="CHEBI:128753"/>
        <dbReference type="EC" id="1.17.7.4"/>
    </reaction>
</comment>
<comment type="cofactor">
    <cofactor evidence="1">
        <name>[4Fe-4S] cluster</name>
        <dbReference type="ChEBI" id="CHEBI:49883"/>
    </cofactor>
    <text evidence="1">Binds 1 [4Fe-4S] cluster per subunit.</text>
</comment>
<comment type="pathway">
    <text evidence="1">Isoprenoid biosynthesis; dimethylallyl diphosphate biosynthesis; dimethylallyl diphosphate from (2E)-4-hydroxy-3-methylbutenyl diphosphate: step 1/1.</text>
</comment>
<comment type="pathway">
    <text evidence="1">Isoprenoid biosynthesis; isopentenyl diphosphate biosynthesis via DXP pathway; isopentenyl diphosphate from 1-deoxy-D-xylulose 5-phosphate: step 6/6.</text>
</comment>
<comment type="similarity">
    <text evidence="1">Belongs to the IspH family.</text>
</comment>
<name>ISPH_BIFLO</name>
<organism>
    <name type="scientific">Bifidobacterium longum (strain NCC 2705)</name>
    <dbReference type="NCBI Taxonomy" id="206672"/>
    <lineage>
        <taxon>Bacteria</taxon>
        <taxon>Bacillati</taxon>
        <taxon>Actinomycetota</taxon>
        <taxon>Actinomycetes</taxon>
        <taxon>Bifidobacteriales</taxon>
        <taxon>Bifidobacteriaceae</taxon>
        <taxon>Bifidobacterium</taxon>
    </lineage>
</organism>
<reference key="1">
    <citation type="journal article" date="2002" name="Proc. Natl. Acad. Sci. U.S.A.">
        <title>The genome sequence of Bifidobacterium longum reflects its adaptation to the human gastrointestinal tract.</title>
        <authorList>
            <person name="Schell M.A."/>
            <person name="Karmirantzou M."/>
            <person name="Snel B."/>
            <person name="Vilanova D."/>
            <person name="Berger B."/>
            <person name="Pessi G."/>
            <person name="Zwahlen M.-C."/>
            <person name="Desiere F."/>
            <person name="Bork P."/>
            <person name="Delley M."/>
            <person name="Pridmore R.D."/>
            <person name="Arigoni F."/>
        </authorList>
    </citation>
    <scope>NUCLEOTIDE SEQUENCE [LARGE SCALE GENOMIC DNA]</scope>
    <source>
        <strain>NCC 2705</strain>
    </source>
</reference>
<sequence length="352" mass="37863">MTADSCNPCLTLENTIDVQEVPMTKSVVLADPRGFCAGVDRAILTVQTILKAAEASGKRTREDGLPPVYVRRQIVHNKHVVEDLAGQGAVFVQELAEIPDAAAQAGIPVVFSAHGVSPVVKAEAERRGMHVVDATCPLVGKVHREVLRFVREGYEIVYIGHKGHDEAVGVVGESPEHVHLIEHESDVDSLDFAPDTKLVLLSQTTLSVDETADTIAALKAKFPWIQEPPSSDICYATSNRQAAVKLVAQQSDCVVIVGSANSSNSVRLMEVAQEGLGERGKAYRVDDASELDPAWFEGLESVGISSGASVPDELVSGVIDALQNLGFTGMKSVETIKENMHFVLPAELRRKK</sequence>
<gene>
    <name evidence="1" type="primary">ispH</name>
    <name type="ordered locus">BL1361</name>
</gene>